<organism>
    <name type="scientific">Escherichia coli (strain 55989 / EAEC)</name>
    <dbReference type="NCBI Taxonomy" id="585055"/>
    <lineage>
        <taxon>Bacteria</taxon>
        <taxon>Pseudomonadati</taxon>
        <taxon>Pseudomonadota</taxon>
        <taxon>Gammaproteobacteria</taxon>
        <taxon>Enterobacterales</taxon>
        <taxon>Enterobacteriaceae</taxon>
        <taxon>Escherichia</taxon>
    </lineage>
</organism>
<evidence type="ECO:0000255" key="1">
    <source>
        <dbReference type="HAMAP-Rule" id="MF_00089"/>
    </source>
</evidence>
<comment type="function">
    <text evidence="1">Catalyzes the synthesis of the hydroxymethylpyrimidine phosphate (HMP-P) moiety of thiamine from aminoimidazole ribotide (AIR) in a radical S-adenosyl-L-methionine (SAM)-dependent reaction.</text>
</comment>
<comment type="catalytic activity">
    <reaction evidence="1">
        <text>5-amino-1-(5-phospho-beta-D-ribosyl)imidazole + S-adenosyl-L-methionine = 4-amino-2-methyl-5-(phosphooxymethyl)pyrimidine + CO + 5'-deoxyadenosine + formate + L-methionine + 3 H(+)</text>
        <dbReference type="Rhea" id="RHEA:24840"/>
        <dbReference type="ChEBI" id="CHEBI:15378"/>
        <dbReference type="ChEBI" id="CHEBI:15740"/>
        <dbReference type="ChEBI" id="CHEBI:17245"/>
        <dbReference type="ChEBI" id="CHEBI:17319"/>
        <dbReference type="ChEBI" id="CHEBI:57844"/>
        <dbReference type="ChEBI" id="CHEBI:58354"/>
        <dbReference type="ChEBI" id="CHEBI:59789"/>
        <dbReference type="ChEBI" id="CHEBI:137981"/>
        <dbReference type="EC" id="4.1.99.17"/>
    </reaction>
</comment>
<comment type="cofactor">
    <cofactor evidence="1">
        <name>[4Fe-4S] cluster</name>
        <dbReference type="ChEBI" id="CHEBI:49883"/>
    </cofactor>
    <text evidence="1">Binds 1 [4Fe-4S] cluster per subunit. The cluster is coordinated with 3 cysteines and an exchangeable S-adenosyl-L-methionine.</text>
</comment>
<comment type="pathway">
    <text evidence="1">Cofactor biosynthesis; thiamine diphosphate biosynthesis.</text>
</comment>
<comment type="subunit">
    <text evidence="1">Homodimer.</text>
</comment>
<comment type="similarity">
    <text evidence="1">Belongs to the ThiC family.</text>
</comment>
<feature type="chain" id="PRO_1000118510" description="Phosphomethylpyrimidine synthase">
    <location>
        <begin position="1"/>
        <end position="631"/>
    </location>
</feature>
<feature type="binding site" evidence="1">
    <location>
        <position position="239"/>
    </location>
    <ligand>
        <name>substrate</name>
    </ligand>
</feature>
<feature type="binding site" evidence="1">
    <location>
        <position position="268"/>
    </location>
    <ligand>
        <name>substrate</name>
    </ligand>
</feature>
<feature type="binding site" evidence="1">
    <location>
        <position position="297"/>
    </location>
    <ligand>
        <name>substrate</name>
    </ligand>
</feature>
<feature type="binding site" evidence="1">
    <location>
        <position position="333"/>
    </location>
    <ligand>
        <name>substrate</name>
    </ligand>
</feature>
<feature type="binding site" evidence="1">
    <location>
        <begin position="353"/>
        <end position="355"/>
    </location>
    <ligand>
        <name>substrate</name>
    </ligand>
</feature>
<feature type="binding site" evidence="1">
    <location>
        <begin position="394"/>
        <end position="397"/>
    </location>
    <ligand>
        <name>substrate</name>
    </ligand>
</feature>
<feature type="binding site" evidence="1">
    <location>
        <position position="433"/>
    </location>
    <ligand>
        <name>substrate</name>
    </ligand>
</feature>
<feature type="binding site" evidence="1">
    <location>
        <position position="437"/>
    </location>
    <ligand>
        <name>Zn(2+)</name>
        <dbReference type="ChEBI" id="CHEBI:29105"/>
    </ligand>
</feature>
<feature type="binding site" evidence="1">
    <location>
        <position position="460"/>
    </location>
    <ligand>
        <name>substrate</name>
    </ligand>
</feature>
<feature type="binding site" evidence="1">
    <location>
        <position position="501"/>
    </location>
    <ligand>
        <name>Zn(2+)</name>
        <dbReference type="ChEBI" id="CHEBI:29105"/>
    </ligand>
</feature>
<feature type="binding site" evidence="1">
    <location>
        <position position="581"/>
    </location>
    <ligand>
        <name>[4Fe-4S] cluster</name>
        <dbReference type="ChEBI" id="CHEBI:49883"/>
        <note>4Fe-4S-S-AdoMet</note>
    </ligand>
</feature>
<feature type="binding site" evidence="1">
    <location>
        <position position="584"/>
    </location>
    <ligand>
        <name>[4Fe-4S] cluster</name>
        <dbReference type="ChEBI" id="CHEBI:49883"/>
        <note>4Fe-4S-S-AdoMet</note>
    </ligand>
</feature>
<feature type="binding site" evidence="1">
    <location>
        <position position="589"/>
    </location>
    <ligand>
        <name>[4Fe-4S] cluster</name>
        <dbReference type="ChEBI" id="CHEBI:49883"/>
        <note>4Fe-4S-S-AdoMet</note>
    </ligand>
</feature>
<gene>
    <name evidence="1" type="primary">thiC</name>
    <name type="ordered locus">EC55989_4479</name>
</gene>
<proteinExistence type="inferred from homology"/>
<protein>
    <recommendedName>
        <fullName evidence="1">Phosphomethylpyrimidine synthase</fullName>
        <ecNumber evidence="1">4.1.99.17</ecNumber>
    </recommendedName>
    <alternativeName>
        <fullName evidence="1">Hydroxymethylpyrimidine phosphate synthase</fullName>
        <shortName evidence="1">HMP-P synthase</shortName>
        <shortName evidence="1">HMP-phosphate synthase</shortName>
        <shortName evidence="1">HMPP synthase</shortName>
    </alternativeName>
    <alternativeName>
        <fullName evidence="1">Thiamine biosynthesis protein ThiC</fullName>
    </alternativeName>
</protein>
<reference key="1">
    <citation type="journal article" date="2009" name="PLoS Genet.">
        <title>Organised genome dynamics in the Escherichia coli species results in highly diverse adaptive paths.</title>
        <authorList>
            <person name="Touchon M."/>
            <person name="Hoede C."/>
            <person name="Tenaillon O."/>
            <person name="Barbe V."/>
            <person name="Baeriswyl S."/>
            <person name="Bidet P."/>
            <person name="Bingen E."/>
            <person name="Bonacorsi S."/>
            <person name="Bouchier C."/>
            <person name="Bouvet O."/>
            <person name="Calteau A."/>
            <person name="Chiapello H."/>
            <person name="Clermont O."/>
            <person name="Cruveiller S."/>
            <person name="Danchin A."/>
            <person name="Diard M."/>
            <person name="Dossat C."/>
            <person name="Karoui M.E."/>
            <person name="Frapy E."/>
            <person name="Garry L."/>
            <person name="Ghigo J.M."/>
            <person name="Gilles A.M."/>
            <person name="Johnson J."/>
            <person name="Le Bouguenec C."/>
            <person name="Lescat M."/>
            <person name="Mangenot S."/>
            <person name="Martinez-Jehanne V."/>
            <person name="Matic I."/>
            <person name="Nassif X."/>
            <person name="Oztas S."/>
            <person name="Petit M.A."/>
            <person name="Pichon C."/>
            <person name="Rouy Z."/>
            <person name="Ruf C.S."/>
            <person name="Schneider D."/>
            <person name="Tourret J."/>
            <person name="Vacherie B."/>
            <person name="Vallenet D."/>
            <person name="Medigue C."/>
            <person name="Rocha E.P.C."/>
            <person name="Denamur E."/>
        </authorList>
    </citation>
    <scope>NUCLEOTIDE SEQUENCE [LARGE SCALE GENOMIC DNA]</scope>
    <source>
        <strain>55989 / EAEC</strain>
    </source>
</reference>
<keyword id="KW-0004">4Fe-4S</keyword>
<keyword id="KW-0408">Iron</keyword>
<keyword id="KW-0411">Iron-sulfur</keyword>
<keyword id="KW-0456">Lyase</keyword>
<keyword id="KW-0479">Metal-binding</keyword>
<keyword id="KW-1185">Reference proteome</keyword>
<keyword id="KW-0949">S-adenosyl-L-methionine</keyword>
<keyword id="KW-0784">Thiamine biosynthesis</keyword>
<keyword id="KW-0862">Zinc</keyword>
<name>THIC_ECO55</name>
<sequence length="631" mass="70869">MSATKLTRREQRARAQHFIDTLEGTAFPNSKRIYITGTHPGVRVPMREIQLSPTLIGGSKEQPQYEENEAIPVYDTSGPYGDPQIAINVQQGLAKLRQPWIDARGDTEELTVRSSDYTKARLADDGLDELRFSGVLTPKRAKAGRRVTQLHYARQGIITPEMEFIAIRENMGRERIRSEVLRHQHPGMSFGARLPENITAEFVRDEVAAGRAIIPANINHPESEPMIIGRNFLVKVNANIGNSAVTSSIEEEVEKLVWSTRWGADTVMDLSTGRYIHETREWILRNSPVPIGTVPIYQALEKVNGIAEDLTWEAFRDTLLEQAEQGVDYFTIHAGVLLRYVPMTAKRLTGIVSRGGSIMAKWCLSHHQENFLYQHFREICEICAAYDVSLSLGDGLRPGSIQDANDEAQFAELHTLGELTKIAWEYDVQVMIEGPGHVPMQMIRRNMTEELEHCHEAPFYTLGPLTTDIAPGYDHFTSGIGAAMIGWFGCAMLCYVTPKEHLGLPNKEDVKQGLITYKIAAHAADLAKGHPGAQIRDNAMSKARFEFRWEDQFNLALDPFTARAYHDETLPQESGKVAHFCSMCGPKFCSMKISQEVRDYAATQTIEMGMADMSENFRARGGEIYLRKEEA</sequence>
<accession>B7LA88</accession>
<dbReference type="EC" id="4.1.99.17" evidence="1"/>
<dbReference type="EMBL" id="CU928145">
    <property type="protein sequence ID" value="CAV01242.1"/>
    <property type="molecule type" value="Genomic_DNA"/>
</dbReference>
<dbReference type="RefSeq" id="WP_001276928.1">
    <property type="nucleotide sequence ID" value="NC_011748.1"/>
</dbReference>
<dbReference type="SMR" id="B7LA88"/>
<dbReference type="KEGG" id="eck:EC55989_4479"/>
<dbReference type="HOGENOM" id="CLU_013181_2_1_6"/>
<dbReference type="UniPathway" id="UPA00060"/>
<dbReference type="Proteomes" id="UP000000746">
    <property type="component" value="Chromosome"/>
</dbReference>
<dbReference type="GO" id="GO:0005829">
    <property type="term" value="C:cytosol"/>
    <property type="evidence" value="ECO:0007669"/>
    <property type="project" value="TreeGrafter"/>
</dbReference>
<dbReference type="GO" id="GO:0051539">
    <property type="term" value="F:4 iron, 4 sulfur cluster binding"/>
    <property type="evidence" value="ECO:0007669"/>
    <property type="project" value="UniProtKB-KW"/>
</dbReference>
<dbReference type="GO" id="GO:0016830">
    <property type="term" value="F:carbon-carbon lyase activity"/>
    <property type="evidence" value="ECO:0007669"/>
    <property type="project" value="InterPro"/>
</dbReference>
<dbReference type="GO" id="GO:0008270">
    <property type="term" value="F:zinc ion binding"/>
    <property type="evidence" value="ECO:0007669"/>
    <property type="project" value="UniProtKB-UniRule"/>
</dbReference>
<dbReference type="GO" id="GO:0009228">
    <property type="term" value="P:thiamine biosynthetic process"/>
    <property type="evidence" value="ECO:0007669"/>
    <property type="project" value="UniProtKB-KW"/>
</dbReference>
<dbReference type="GO" id="GO:0009229">
    <property type="term" value="P:thiamine diphosphate biosynthetic process"/>
    <property type="evidence" value="ECO:0007669"/>
    <property type="project" value="UniProtKB-UniRule"/>
</dbReference>
<dbReference type="FunFam" id="3.20.20.540:FF:000001">
    <property type="entry name" value="Phosphomethylpyrimidine synthase"/>
    <property type="match status" value="1"/>
</dbReference>
<dbReference type="Gene3D" id="6.10.250.620">
    <property type="match status" value="1"/>
</dbReference>
<dbReference type="Gene3D" id="3.20.20.540">
    <property type="entry name" value="Radical SAM ThiC family, central domain"/>
    <property type="match status" value="1"/>
</dbReference>
<dbReference type="HAMAP" id="MF_00089">
    <property type="entry name" value="ThiC"/>
    <property type="match status" value="1"/>
</dbReference>
<dbReference type="InterPro" id="IPR037509">
    <property type="entry name" value="ThiC"/>
</dbReference>
<dbReference type="InterPro" id="IPR025747">
    <property type="entry name" value="ThiC-associated_dom"/>
</dbReference>
<dbReference type="InterPro" id="IPR038521">
    <property type="entry name" value="ThiC/Bza_core_dom"/>
</dbReference>
<dbReference type="InterPro" id="IPR002817">
    <property type="entry name" value="ThiC/BzaA/B"/>
</dbReference>
<dbReference type="NCBIfam" id="NF006763">
    <property type="entry name" value="PRK09284.1"/>
    <property type="match status" value="1"/>
</dbReference>
<dbReference type="NCBIfam" id="NF009895">
    <property type="entry name" value="PRK13352.1"/>
    <property type="match status" value="1"/>
</dbReference>
<dbReference type="NCBIfam" id="TIGR00190">
    <property type="entry name" value="thiC"/>
    <property type="match status" value="1"/>
</dbReference>
<dbReference type="PANTHER" id="PTHR30557:SF1">
    <property type="entry name" value="PHOSPHOMETHYLPYRIMIDINE SYNTHASE, CHLOROPLASTIC"/>
    <property type="match status" value="1"/>
</dbReference>
<dbReference type="PANTHER" id="PTHR30557">
    <property type="entry name" value="THIAMINE BIOSYNTHESIS PROTEIN THIC"/>
    <property type="match status" value="1"/>
</dbReference>
<dbReference type="Pfam" id="PF13667">
    <property type="entry name" value="ThiC-associated"/>
    <property type="match status" value="1"/>
</dbReference>
<dbReference type="Pfam" id="PF01964">
    <property type="entry name" value="ThiC_Rad_SAM"/>
    <property type="match status" value="1"/>
</dbReference>
<dbReference type="SFLD" id="SFLDF00407">
    <property type="entry name" value="phosphomethylpyrimidine_syntha"/>
    <property type="match status" value="1"/>
</dbReference>
<dbReference type="SFLD" id="SFLDG01114">
    <property type="entry name" value="phosphomethylpyrimidine_syntha"/>
    <property type="match status" value="1"/>
</dbReference>
<dbReference type="SFLD" id="SFLDS00113">
    <property type="entry name" value="Radical_SAM_Phosphomethylpyrim"/>
    <property type="match status" value="1"/>
</dbReference>